<sequence length="300" mass="32927">MNQSYGRLVSRAAIAATAMASLLLLIKIFAWWYTGSVSILAALVDSLVDIGASLTNLLVVRYSLQPADDNHSFGHGKAESLAALAQSMFISGSALFLFLTGIQHLISPTPMTDPGVGVIVTIVALICTIILVSFQRWVVRRTQSQAVRADMLHYQSDVMMNGAILLALGLSWYGWHRADALFALGIGIYILYSALRMGYEAVQSLLDRALPDEERQEIIDIVTSWPGVSGAHDLRTRQSGPTRFIQIHLEMEDSLPLVQAHMVADQVEQAILRRFPGSDVIIHQDPCSVVPREGKRSMLS</sequence>
<reference key="1">
    <citation type="journal article" date="2008" name="J. Bacteriol.">
        <title>The complete genome sequence of Escherichia coli DH10B: insights into the biology of a laboratory workhorse.</title>
        <authorList>
            <person name="Durfee T."/>
            <person name="Nelson R."/>
            <person name="Baldwin S."/>
            <person name="Plunkett G. III"/>
            <person name="Burland V."/>
            <person name="Mau B."/>
            <person name="Petrosino J.F."/>
            <person name="Qin X."/>
            <person name="Muzny D.M."/>
            <person name="Ayele M."/>
            <person name="Gibbs R.A."/>
            <person name="Csorgo B."/>
            <person name="Posfai G."/>
            <person name="Weinstock G.M."/>
            <person name="Blattner F.R."/>
        </authorList>
    </citation>
    <scope>NUCLEOTIDE SEQUENCE [LARGE SCALE GENOMIC DNA]</scope>
    <source>
        <strain>K12 / DH10B</strain>
    </source>
</reference>
<gene>
    <name evidence="1" type="primary">fieF</name>
    <name type="ordered locus">ECDH10B_4104</name>
</gene>
<comment type="function">
    <text evidence="1">Divalent metal cation transporter which exports Zn(2+), Cd(2+) and possibly Fe(2+). May be involved in zinc and iron detoxification by efflux.</text>
</comment>
<comment type="catalytic activity">
    <reaction evidence="1">
        <text>Zn(2+)(in) + H(+)(out) = Zn(2+)(out) + H(+)(in)</text>
        <dbReference type="Rhea" id="RHEA:28839"/>
        <dbReference type="ChEBI" id="CHEBI:15378"/>
        <dbReference type="ChEBI" id="CHEBI:29105"/>
    </reaction>
</comment>
<comment type="catalytic activity">
    <reaction evidence="1">
        <text>Cd(2+)(in) + H(+)(out) = Cd(2+)(out) + H(+)(in)</text>
        <dbReference type="Rhea" id="RHEA:28739"/>
        <dbReference type="ChEBI" id="CHEBI:15378"/>
        <dbReference type="ChEBI" id="CHEBI:48775"/>
    </reaction>
</comment>
<comment type="catalytic activity">
    <reaction evidence="1">
        <text>Fe(2+)(in) + H(+)(out) = Fe(2+)(out) + H(+)(in)</text>
        <dbReference type="Rhea" id="RHEA:29439"/>
        <dbReference type="ChEBI" id="CHEBI:15378"/>
        <dbReference type="ChEBI" id="CHEBI:29033"/>
    </reaction>
</comment>
<comment type="subunit">
    <text evidence="1">Homodimer.</text>
</comment>
<comment type="subcellular location">
    <subcellularLocation>
        <location evidence="1">Cell inner membrane</location>
        <topology evidence="1">Multi-pass membrane protein</topology>
    </subcellularLocation>
</comment>
<comment type="similarity">
    <text evidence="1">Belongs to the cation diffusion facilitator (CDF) transporter (TC 2.A.4) family. FieF subfamily.</text>
</comment>
<proteinExistence type="inferred from homology"/>
<accession>B1XB81</accession>
<organism>
    <name type="scientific">Escherichia coli (strain K12 / DH10B)</name>
    <dbReference type="NCBI Taxonomy" id="316385"/>
    <lineage>
        <taxon>Bacteria</taxon>
        <taxon>Pseudomonadati</taxon>
        <taxon>Pseudomonadota</taxon>
        <taxon>Gammaproteobacteria</taxon>
        <taxon>Enterobacterales</taxon>
        <taxon>Enterobacteriaceae</taxon>
        <taxon>Escherichia</taxon>
    </lineage>
</organism>
<keyword id="KW-0997">Cell inner membrane</keyword>
<keyword id="KW-1003">Cell membrane</keyword>
<keyword id="KW-0406">Ion transport</keyword>
<keyword id="KW-0408">Iron</keyword>
<keyword id="KW-0410">Iron transport</keyword>
<keyword id="KW-0472">Membrane</keyword>
<keyword id="KW-0479">Metal-binding</keyword>
<keyword id="KW-0812">Transmembrane</keyword>
<keyword id="KW-1133">Transmembrane helix</keyword>
<keyword id="KW-0813">Transport</keyword>
<keyword id="KW-0862">Zinc</keyword>
<keyword id="KW-0864">Zinc transport</keyword>
<feature type="chain" id="PRO_1000145693" description="Cation-efflux pump FieF">
    <location>
        <begin position="1"/>
        <end position="300"/>
    </location>
</feature>
<feature type="transmembrane region" description="Helical" evidence="1">
    <location>
        <begin position="12"/>
        <end position="32"/>
    </location>
</feature>
<feature type="transmembrane region" description="Helical" evidence="1">
    <location>
        <begin position="39"/>
        <end position="59"/>
    </location>
</feature>
<feature type="transmembrane region" description="Helical" evidence="1">
    <location>
        <begin position="82"/>
        <end position="102"/>
    </location>
</feature>
<feature type="transmembrane region" description="Helical" evidence="1">
    <location>
        <begin position="114"/>
        <end position="134"/>
    </location>
</feature>
<feature type="transmembrane region" description="Helical" evidence="1">
    <location>
        <begin position="156"/>
        <end position="176"/>
    </location>
</feature>
<feature type="transmembrane region" description="Helical" evidence="1">
    <location>
        <begin position="178"/>
        <end position="198"/>
    </location>
</feature>
<feature type="binding site" evidence="1">
    <location>
        <position position="45"/>
    </location>
    <ligand>
        <name>Zn(2+)</name>
        <dbReference type="ChEBI" id="CHEBI:29105"/>
    </ligand>
</feature>
<feature type="binding site" evidence="1">
    <location>
        <position position="49"/>
    </location>
    <ligand>
        <name>Zn(2+)</name>
        <dbReference type="ChEBI" id="CHEBI:29105"/>
    </ligand>
</feature>
<feature type="binding site" evidence="1">
    <location>
        <position position="153"/>
    </location>
    <ligand>
        <name>Zn(2+)</name>
        <dbReference type="ChEBI" id="CHEBI:29105"/>
    </ligand>
</feature>
<feature type="binding site" evidence="1">
    <location>
        <position position="157"/>
    </location>
    <ligand>
        <name>Zn(2+)</name>
        <dbReference type="ChEBI" id="CHEBI:29105"/>
    </ligand>
</feature>
<protein>
    <recommendedName>
        <fullName evidence="1">Cation-efflux pump FieF</fullName>
    </recommendedName>
</protein>
<dbReference type="EMBL" id="CP000948">
    <property type="protein sequence ID" value="ACB04927.1"/>
    <property type="molecule type" value="Genomic_DNA"/>
</dbReference>
<dbReference type="RefSeq" id="WP_001076742.1">
    <property type="nucleotide sequence ID" value="NC_010473.1"/>
</dbReference>
<dbReference type="SMR" id="B1XB81"/>
<dbReference type="GeneID" id="75204588"/>
<dbReference type="KEGG" id="ecd:ECDH10B_4104"/>
<dbReference type="HOGENOM" id="CLU_013430_3_0_6"/>
<dbReference type="GO" id="GO:0005886">
    <property type="term" value="C:plasma membrane"/>
    <property type="evidence" value="ECO:0007669"/>
    <property type="project" value="UniProtKB-SubCell"/>
</dbReference>
<dbReference type="GO" id="GO:0015086">
    <property type="term" value="F:cadmium ion transmembrane transporter activity"/>
    <property type="evidence" value="ECO:0007669"/>
    <property type="project" value="UniProtKB-UniRule"/>
</dbReference>
<dbReference type="GO" id="GO:0015093">
    <property type="term" value="F:ferrous iron transmembrane transporter activity"/>
    <property type="evidence" value="ECO:0007669"/>
    <property type="project" value="TreeGrafter"/>
</dbReference>
<dbReference type="GO" id="GO:0046872">
    <property type="term" value="F:metal ion binding"/>
    <property type="evidence" value="ECO:0007669"/>
    <property type="project" value="UniProtKB-KW"/>
</dbReference>
<dbReference type="GO" id="GO:0015341">
    <property type="term" value="F:zinc efflux antiporter activity"/>
    <property type="evidence" value="ECO:0007669"/>
    <property type="project" value="TreeGrafter"/>
</dbReference>
<dbReference type="GO" id="GO:0006882">
    <property type="term" value="P:intracellular zinc ion homeostasis"/>
    <property type="evidence" value="ECO:0007669"/>
    <property type="project" value="TreeGrafter"/>
</dbReference>
<dbReference type="FunFam" id="1.20.1510.10:FF:000001">
    <property type="entry name" value="Ferrous-iron efflux pump FieF"/>
    <property type="match status" value="1"/>
</dbReference>
<dbReference type="FunFam" id="3.30.70.1350:FF:000002">
    <property type="entry name" value="Ferrous-iron efflux pump FieF"/>
    <property type="match status" value="1"/>
</dbReference>
<dbReference type="Gene3D" id="1.20.1510.10">
    <property type="entry name" value="Cation efflux protein transmembrane domain"/>
    <property type="match status" value="1"/>
</dbReference>
<dbReference type="Gene3D" id="3.30.70.1350">
    <property type="entry name" value="Cation efflux protein, cytoplasmic domain"/>
    <property type="match status" value="1"/>
</dbReference>
<dbReference type="HAMAP" id="MF_01425">
    <property type="entry name" value="Cation_efflux_FieF"/>
    <property type="match status" value="1"/>
</dbReference>
<dbReference type="InterPro" id="IPR002524">
    <property type="entry name" value="Cation_efflux"/>
</dbReference>
<dbReference type="InterPro" id="IPR027470">
    <property type="entry name" value="Cation_efflux_CTD"/>
</dbReference>
<dbReference type="InterPro" id="IPR036837">
    <property type="entry name" value="Cation_efflux_CTD_sf"/>
</dbReference>
<dbReference type="InterPro" id="IPR023783">
    <property type="entry name" value="Cation_efflux_FieF"/>
</dbReference>
<dbReference type="InterPro" id="IPR027469">
    <property type="entry name" value="Cation_efflux_TMD_sf"/>
</dbReference>
<dbReference type="InterPro" id="IPR050291">
    <property type="entry name" value="CDF_Transporter"/>
</dbReference>
<dbReference type="NCBIfam" id="TIGR01297">
    <property type="entry name" value="CDF"/>
    <property type="match status" value="1"/>
</dbReference>
<dbReference type="NCBIfam" id="NF007064">
    <property type="entry name" value="PRK09509.1"/>
    <property type="match status" value="1"/>
</dbReference>
<dbReference type="PANTHER" id="PTHR43840:SF41">
    <property type="entry name" value="CATION-EFFLUX PUMP FIEF"/>
    <property type="match status" value="1"/>
</dbReference>
<dbReference type="PANTHER" id="PTHR43840">
    <property type="entry name" value="MITOCHONDRIAL METAL TRANSPORTER 1-RELATED"/>
    <property type="match status" value="1"/>
</dbReference>
<dbReference type="Pfam" id="PF01545">
    <property type="entry name" value="Cation_efflux"/>
    <property type="match status" value="1"/>
</dbReference>
<dbReference type="Pfam" id="PF16916">
    <property type="entry name" value="ZT_dimer"/>
    <property type="match status" value="1"/>
</dbReference>
<dbReference type="SUPFAM" id="SSF160240">
    <property type="entry name" value="Cation efflux protein cytoplasmic domain-like"/>
    <property type="match status" value="1"/>
</dbReference>
<dbReference type="SUPFAM" id="SSF161111">
    <property type="entry name" value="Cation efflux protein transmembrane domain-like"/>
    <property type="match status" value="1"/>
</dbReference>
<evidence type="ECO:0000255" key="1">
    <source>
        <dbReference type="HAMAP-Rule" id="MF_01425"/>
    </source>
</evidence>
<name>FIEF_ECODH</name>